<protein>
    <recommendedName>
        <fullName evidence="1">Ribosome assembly factor mrt4</fullName>
    </recommendedName>
    <alternativeName>
        <fullName evidence="1">mRNA turnover protein 4</fullName>
    </alternativeName>
</protein>
<sequence length="252" mass="28329">MPKSKRAKVYNLTQVTKKNREQKEKLFENIRECIPNYQHCFVFSIDNMRNNYLKDVRKELNDCRIFFGKTKLTARALGTTPEDAQADGLDKLSKYLSGSVGLIFTNRDPSEIKDYFVNLTQVDFARAGSVATRTITIPSGPLYSTGGEVPAEHDVPVSHTLEPELRRLGMPTRMVKGKVCLGDEAGEGDDYVICKEGETLDSRQTRLLKLFSICLSEFRVKLLAYWSAASGEVTELEKPGEAGAEEMEEDDE</sequence>
<reference key="1">
    <citation type="journal article" date="2003" name="Nature">
        <title>The genome sequence of the filamentous fungus Neurospora crassa.</title>
        <authorList>
            <person name="Galagan J.E."/>
            <person name="Calvo S.E."/>
            <person name="Borkovich K.A."/>
            <person name="Selker E.U."/>
            <person name="Read N.D."/>
            <person name="Jaffe D.B."/>
            <person name="FitzHugh W."/>
            <person name="Ma L.-J."/>
            <person name="Smirnov S."/>
            <person name="Purcell S."/>
            <person name="Rehman B."/>
            <person name="Elkins T."/>
            <person name="Engels R."/>
            <person name="Wang S."/>
            <person name="Nielsen C.B."/>
            <person name="Butler J."/>
            <person name="Endrizzi M."/>
            <person name="Qui D."/>
            <person name="Ianakiev P."/>
            <person name="Bell-Pedersen D."/>
            <person name="Nelson M.A."/>
            <person name="Werner-Washburne M."/>
            <person name="Selitrennikoff C.P."/>
            <person name="Kinsey J.A."/>
            <person name="Braun E.L."/>
            <person name="Zelter A."/>
            <person name="Schulte U."/>
            <person name="Kothe G.O."/>
            <person name="Jedd G."/>
            <person name="Mewes H.-W."/>
            <person name="Staben C."/>
            <person name="Marcotte E."/>
            <person name="Greenberg D."/>
            <person name="Roy A."/>
            <person name="Foley K."/>
            <person name="Naylor J."/>
            <person name="Stange-Thomann N."/>
            <person name="Barrett R."/>
            <person name="Gnerre S."/>
            <person name="Kamal M."/>
            <person name="Kamvysselis M."/>
            <person name="Mauceli E.W."/>
            <person name="Bielke C."/>
            <person name="Rudd S."/>
            <person name="Frishman D."/>
            <person name="Krystofova S."/>
            <person name="Rasmussen C."/>
            <person name="Metzenberg R.L."/>
            <person name="Perkins D.D."/>
            <person name="Kroken S."/>
            <person name="Cogoni C."/>
            <person name="Macino G."/>
            <person name="Catcheside D.E.A."/>
            <person name="Li W."/>
            <person name="Pratt R.J."/>
            <person name="Osmani S.A."/>
            <person name="DeSouza C.P.C."/>
            <person name="Glass N.L."/>
            <person name="Orbach M.J."/>
            <person name="Berglund J.A."/>
            <person name="Voelker R."/>
            <person name="Yarden O."/>
            <person name="Plamann M."/>
            <person name="Seiler S."/>
            <person name="Dunlap J.C."/>
            <person name="Radford A."/>
            <person name="Aramayo R."/>
            <person name="Natvig D.O."/>
            <person name="Alex L.A."/>
            <person name="Mannhaupt G."/>
            <person name="Ebbole D.J."/>
            <person name="Freitag M."/>
            <person name="Paulsen I."/>
            <person name="Sachs M.S."/>
            <person name="Lander E.S."/>
            <person name="Nusbaum C."/>
            <person name="Birren B.W."/>
        </authorList>
    </citation>
    <scope>NUCLEOTIDE SEQUENCE [LARGE SCALE GENOMIC DNA]</scope>
    <source>
        <strain>ATCC 24698 / 74-OR23-1A / CBS 708.71 / DSM 1257 / FGSC 987</strain>
    </source>
</reference>
<name>MRT4_NEUCR</name>
<feature type="chain" id="PRO_0000154813" description="Ribosome assembly factor mrt4">
    <location>
        <begin position="1"/>
        <end position="252"/>
    </location>
</feature>
<dbReference type="EMBL" id="CM002238">
    <property type="protein sequence ID" value="EAA29824.1"/>
    <property type="molecule type" value="Genomic_DNA"/>
</dbReference>
<dbReference type="RefSeq" id="XP_959060.1">
    <property type="nucleotide sequence ID" value="XM_953967.2"/>
</dbReference>
<dbReference type="SMR" id="Q7S302"/>
<dbReference type="FunCoup" id="Q7S302">
    <property type="interactions" value="1031"/>
</dbReference>
<dbReference type="STRING" id="367110.Q7S302"/>
<dbReference type="PaxDb" id="5141-EFNCRP00000007843"/>
<dbReference type="EnsemblFungi" id="EAA29824">
    <property type="protein sequence ID" value="EAA29824"/>
    <property type="gene ID" value="NCU07547"/>
</dbReference>
<dbReference type="GeneID" id="3875198"/>
<dbReference type="KEGG" id="ncr:NCU07547"/>
<dbReference type="VEuPathDB" id="FungiDB:NCU07547"/>
<dbReference type="HOGENOM" id="CLU_071690_0_0_1"/>
<dbReference type="InParanoid" id="Q7S302"/>
<dbReference type="OMA" id="LEWAENY"/>
<dbReference type="OrthoDB" id="10262308at2759"/>
<dbReference type="Proteomes" id="UP000001805">
    <property type="component" value="Chromosome 3, Linkage Group III"/>
</dbReference>
<dbReference type="GO" id="GO:0005737">
    <property type="term" value="C:cytoplasm"/>
    <property type="evidence" value="ECO:0007669"/>
    <property type="project" value="UniProtKB-SubCell"/>
</dbReference>
<dbReference type="GO" id="GO:0005730">
    <property type="term" value="C:nucleolus"/>
    <property type="evidence" value="ECO:0000318"/>
    <property type="project" value="GO_Central"/>
</dbReference>
<dbReference type="GO" id="GO:0005654">
    <property type="term" value="C:nucleoplasm"/>
    <property type="evidence" value="ECO:0007669"/>
    <property type="project" value="EnsemblFungi"/>
</dbReference>
<dbReference type="GO" id="GO:0030687">
    <property type="term" value="C:preribosome, large subunit precursor"/>
    <property type="evidence" value="ECO:0000318"/>
    <property type="project" value="GO_Central"/>
</dbReference>
<dbReference type="GO" id="GO:0032040">
    <property type="term" value="C:small-subunit processome"/>
    <property type="evidence" value="ECO:0007669"/>
    <property type="project" value="EnsemblFungi"/>
</dbReference>
<dbReference type="GO" id="GO:0000956">
    <property type="term" value="P:nuclear-transcribed mRNA catabolic process"/>
    <property type="evidence" value="ECO:0000318"/>
    <property type="project" value="GO_Central"/>
</dbReference>
<dbReference type="GO" id="GO:0000027">
    <property type="term" value="P:ribosomal large subunit assembly"/>
    <property type="evidence" value="ECO:0007669"/>
    <property type="project" value="InterPro"/>
</dbReference>
<dbReference type="GO" id="GO:0042273">
    <property type="term" value="P:ribosomal large subunit biogenesis"/>
    <property type="evidence" value="ECO:0000318"/>
    <property type="project" value="GO_Central"/>
</dbReference>
<dbReference type="GO" id="GO:0000055">
    <property type="term" value="P:ribosomal large subunit export from nucleus"/>
    <property type="evidence" value="ECO:0007669"/>
    <property type="project" value="EnsemblFungi"/>
</dbReference>
<dbReference type="GO" id="GO:0006364">
    <property type="term" value="P:rRNA processing"/>
    <property type="evidence" value="ECO:0000318"/>
    <property type="project" value="GO_Central"/>
</dbReference>
<dbReference type="CDD" id="cd05796">
    <property type="entry name" value="Ribosomal_P0_like"/>
    <property type="match status" value="1"/>
</dbReference>
<dbReference type="FunFam" id="3.30.70.1730:FF:000005">
    <property type="entry name" value="Ribosome assembly factor mrt4"/>
    <property type="match status" value="1"/>
</dbReference>
<dbReference type="FunFam" id="3.90.105.20:FF:000003">
    <property type="entry name" value="Ribosome assembly factor mrt4"/>
    <property type="match status" value="1"/>
</dbReference>
<dbReference type="Gene3D" id="3.30.70.1730">
    <property type="match status" value="1"/>
</dbReference>
<dbReference type="Gene3D" id="3.90.105.20">
    <property type="match status" value="1"/>
</dbReference>
<dbReference type="InterPro" id="IPR033867">
    <property type="entry name" value="Mrt4"/>
</dbReference>
<dbReference type="InterPro" id="IPR001790">
    <property type="entry name" value="Ribosomal_uL10"/>
</dbReference>
<dbReference type="InterPro" id="IPR040637">
    <property type="entry name" value="Ribosomal_uL10-like_insert"/>
</dbReference>
<dbReference type="InterPro" id="IPR043164">
    <property type="entry name" value="Ribosomal_uL10-like_insert_sf"/>
</dbReference>
<dbReference type="InterPro" id="IPR043141">
    <property type="entry name" value="Ribosomal_uL10-like_sf"/>
</dbReference>
<dbReference type="InterPro" id="IPR051742">
    <property type="entry name" value="Ribosome_Assembly_uL10"/>
</dbReference>
<dbReference type="PANTHER" id="PTHR45841:SF1">
    <property type="entry name" value="MRNA TURNOVER PROTEIN 4 HOMOLOG"/>
    <property type="match status" value="1"/>
</dbReference>
<dbReference type="PANTHER" id="PTHR45841">
    <property type="entry name" value="MRNA TURNOVER PROTEIN 4 MRTO4"/>
    <property type="match status" value="1"/>
</dbReference>
<dbReference type="Pfam" id="PF00466">
    <property type="entry name" value="Ribosomal_L10"/>
    <property type="match status" value="1"/>
</dbReference>
<dbReference type="Pfam" id="PF17777">
    <property type="entry name" value="RL10P_insert"/>
    <property type="match status" value="1"/>
</dbReference>
<dbReference type="SUPFAM" id="SSF160369">
    <property type="entry name" value="Ribosomal protein L10-like"/>
    <property type="match status" value="1"/>
</dbReference>
<proteinExistence type="inferred from homology"/>
<organism>
    <name type="scientific">Neurospora crassa (strain ATCC 24698 / 74-OR23-1A / CBS 708.71 / DSM 1257 / FGSC 987)</name>
    <dbReference type="NCBI Taxonomy" id="367110"/>
    <lineage>
        <taxon>Eukaryota</taxon>
        <taxon>Fungi</taxon>
        <taxon>Dikarya</taxon>
        <taxon>Ascomycota</taxon>
        <taxon>Pezizomycotina</taxon>
        <taxon>Sordariomycetes</taxon>
        <taxon>Sordariomycetidae</taxon>
        <taxon>Sordariales</taxon>
        <taxon>Sordariaceae</taxon>
        <taxon>Neurospora</taxon>
    </lineage>
</organism>
<evidence type="ECO:0000250" key="1">
    <source>
        <dbReference type="UniProtKB" id="P33201"/>
    </source>
</evidence>
<evidence type="ECO:0000305" key="2"/>
<comment type="function">
    <text evidence="1">Component of the ribosome assembly machinery. Nuclear paralog of the ribosomal protein P0, it binds pre-60S subunits at an early stage of assembly in the nucleolus, and is replaced by P0 in cytoplasmic pre-60S subunits and mature 80S ribosomes.</text>
</comment>
<comment type="subunit">
    <text evidence="1">Associates with the pre-60S ribosomal particle.</text>
</comment>
<comment type="subcellular location">
    <subcellularLocation>
        <location evidence="1">Nucleus</location>
        <location evidence="1">Nucleolus</location>
    </subcellularLocation>
    <subcellularLocation>
        <location evidence="1">Cytoplasm</location>
    </subcellularLocation>
    <text evidence="1">Shuttles between the nucleus and the cytoplasm.</text>
</comment>
<comment type="similarity">
    <text evidence="2">Belongs to the universal ribosomal protein uL10 family.</text>
</comment>
<gene>
    <name evidence="1" type="primary">mrt4</name>
    <name type="ORF">NCU07547</name>
</gene>
<keyword id="KW-0963">Cytoplasm</keyword>
<keyword id="KW-0539">Nucleus</keyword>
<keyword id="KW-1185">Reference proteome</keyword>
<keyword id="KW-0690">Ribosome biogenesis</keyword>
<accession>Q7S302</accession>